<organism>
    <name type="scientific">Nitrosomonas eutropha (strain DSM 101675 / C91 / Nm57)</name>
    <dbReference type="NCBI Taxonomy" id="335283"/>
    <lineage>
        <taxon>Bacteria</taxon>
        <taxon>Pseudomonadati</taxon>
        <taxon>Pseudomonadota</taxon>
        <taxon>Betaproteobacteria</taxon>
        <taxon>Nitrosomonadales</taxon>
        <taxon>Nitrosomonadaceae</taxon>
        <taxon>Nitrosomonas</taxon>
    </lineage>
</organism>
<protein>
    <recommendedName>
        <fullName evidence="1">ATP synthase subunit beta 1</fullName>
        <ecNumber evidence="1">7.1.2.2</ecNumber>
    </recommendedName>
    <alternativeName>
        <fullName evidence="1">ATP synthase F1 sector subunit beta 1</fullName>
    </alternativeName>
    <alternativeName>
        <fullName evidence="1">F-ATPase subunit beta 1</fullName>
    </alternativeName>
</protein>
<proteinExistence type="inferred from homology"/>
<reference key="1">
    <citation type="journal article" date="2007" name="Environ. Microbiol.">
        <title>Whole-genome analysis of the ammonia-oxidizing bacterium, Nitrosomonas eutropha C91: implications for niche adaptation.</title>
        <authorList>
            <person name="Stein L.Y."/>
            <person name="Arp D.J."/>
            <person name="Berube P.M."/>
            <person name="Chain P.S."/>
            <person name="Hauser L."/>
            <person name="Jetten M.S."/>
            <person name="Klotz M.G."/>
            <person name="Larimer F.W."/>
            <person name="Norton J.M."/>
            <person name="Op den Camp H.J.M."/>
            <person name="Shin M."/>
            <person name="Wei X."/>
        </authorList>
    </citation>
    <scope>NUCLEOTIDE SEQUENCE [LARGE SCALE GENOMIC DNA]</scope>
    <source>
        <strain>DSM 101675 / C91 / Nm57</strain>
    </source>
</reference>
<evidence type="ECO:0000255" key="1">
    <source>
        <dbReference type="HAMAP-Rule" id="MF_01347"/>
    </source>
</evidence>
<sequence>MSHQGKIVQCIGAVIDVEFASEGIPKVYDALVMEGSELTLEVQQQLGDGVVRTIALGSSDGLRRGMMVTNTQKQISVPVGTKTLGRIMDVLGRPIDEMGEIGAESFMPIHRTAPAFDELSASTELLETGIKVIDLICPFAKGGKVGLFGGAGVGKTVNMMELIRNIAIEHSGYSVFAGVGERTREGNDFYHEMKDSNVLDKVALVYGQMNEPPGNRLRVALTGLTMAEAFRDEGRDVLFFVDNIYRYTLAGTEVSALLGRMPSAVGYQPTLAEEMGRLQERITSSKTGSITSIQAVYVPADDLTDPSPATTFGHLDATVVLSRDIASLGIYPAVDPLDSTSRQLDPLVVGEDHYNTAREVQQTLQRYKELRDIIAILGMDELSPEDKLSVSRARKIQRFLSQPFFVAEVFTGSPGKYVSLKETIKGFKGIINGEYDDIPEQAFYMVGGIEEVLEKAKSFQ</sequence>
<keyword id="KW-0066">ATP synthesis</keyword>
<keyword id="KW-0067">ATP-binding</keyword>
<keyword id="KW-0997">Cell inner membrane</keyword>
<keyword id="KW-1003">Cell membrane</keyword>
<keyword id="KW-0139">CF(1)</keyword>
<keyword id="KW-0375">Hydrogen ion transport</keyword>
<keyword id="KW-0406">Ion transport</keyword>
<keyword id="KW-0472">Membrane</keyword>
<keyword id="KW-0547">Nucleotide-binding</keyword>
<keyword id="KW-1278">Translocase</keyword>
<keyword id="KW-0813">Transport</keyword>
<accession>Q0AJB0</accession>
<comment type="function">
    <text evidence="1">Produces ATP from ADP in the presence of a proton gradient across the membrane. The catalytic sites are hosted primarily by the beta subunits.</text>
</comment>
<comment type="catalytic activity">
    <reaction evidence="1">
        <text>ATP + H2O + 4 H(+)(in) = ADP + phosphate + 5 H(+)(out)</text>
        <dbReference type="Rhea" id="RHEA:57720"/>
        <dbReference type="ChEBI" id="CHEBI:15377"/>
        <dbReference type="ChEBI" id="CHEBI:15378"/>
        <dbReference type="ChEBI" id="CHEBI:30616"/>
        <dbReference type="ChEBI" id="CHEBI:43474"/>
        <dbReference type="ChEBI" id="CHEBI:456216"/>
        <dbReference type="EC" id="7.1.2.2"/>
    </reaction>
</comment>
<comment type="subunit">
    <text evidence="1">F-type ATPases have 2 components, CF(1) - the catalytic core - and CF(0) - the membrane proton channel. CF(1) has five subunits: alpha(3), beta(3), gamma(1), delta(1), epsilon(1). CF(0) has three main subunits: a(1), b(2) and c(9-12). The alpha and beta chains form an alternating ring which encloses part of the gamma chain. CF(1) is attached to CF(0) by a central stalk formed by the gamma and epsilon chains, while a peripheral stalk is formed by the delta and b chains.</text>
</comment>
<comment type="subcellular location">
    <subcellularLocation>
        <location evidence="1">Cell inner membrane</location>
        <topology evidence="1">Peripheral membrane protein</topology>
    </subcellularLocation>
</comment>
<comment type="similarity">
    <text evidence="1">Belongs to the ATPase alpha/beta chains family.</text>
</comment>
<name>ATPB1_NITEC</name>
<gene>
    <name evidence="1" type="primary">atpD1</name>
    <name type="ordered locus">Neut_0277</name>
</gene>
<feature type="chain" id="PRO_0000339554" description="ATP synthase subunit beta 1">
    <location>
        <begin position="1"/>
        <end position="460"/>
    </location>
</feature>
<feature type="binding site" evidence="1">
    <location>
        <begin position="149"/>
        <end position="156"/>
    </location>
    <ligand>
        <name>ATP</name>
        <dbReference type="ChEBI" id="CHEBI:30616"/>
    </ligand>
</feature>
<dbReference type="EC" id="7.1.2.2" evidence="1"/>
<dbReference type="EMBL" id="CP000450">
    <property type="protein sequence ID" value="ABI58561.1"/>
    <property type="molecule type" value="Genomic_DNA"/>
</dbReference>
<dbReference type="RefSeq" id="WP_011633405.1">
    <property type="nucleotide sequence ID" value="NC_008344.1"/>
</dbReference>
<dbReference type="SMR" id="Q0AJB0"/>
<dbReference type="STRING" id="335283.Neut_0277"/>
<dbReference type="KEGG" id="net:Neut_0277"/>
<dbReference type="eggNOG" id="COG0055">
    <property type="taxonomic scope" value="Bacteria"/>
</dbReference>
<dbReference type="HOGENOM" id="CLU_022398_0_2_4"/>
<dbReference type="OrthoDB" id="9801639at2"/>
<dbReference type="Proteomes" id="UP000001966">
    <property type="component" value="Chromosome"/>
</dbReference>
<dbReference type="GO" id="GO:0005886">
    <property type="term" value="C:plasma membrane"/>
    <property type="evidence" value="ECO:0007669"/>
    <property type="project" value="UniProtKB-SubCell"/>
</dbReference>
<dbReference type="GO" id="GO:0045259">
    <property type="term" value="C:proton-transporting ATP synthase complex"/>
    <property type="evidence" value="ECO:0007669"/>
    <property type="project" value="UniProtKB-KW"/>
</dbReference>
<dbReference type="GO" id="GO:0005524">
    <property type="term" value="F:ATP binding"/>
    <property type="evidence" value="ECO:0007669"/>
    <property type="project" value="UniProtKB-UniRule"/>
</dbReference>
<dbReference type="GO" id="GO:0016887">
    <property type="term" value="F:ATP hydrolysis activity"/>
    <property type="evidence" value="ECO:0007669"/>
    <property type="project" value="InterPro"/>
</dbReference>
<dbReference type="GO" id="GO:0046933">
    <property type="term" value="F:proton-transporting ATP synthase activity, rotational mechanism"/>
    <property type="evidence" value="ECO:0007669"/>
    <property type="project" value="UniProtKB-UniRule"/>
</dbReference>
<dbReference type="CDD" id="cd18110">
    <property type="entry name" value="ATP-synt_F1_beta_C"/>
    <property type="match status" value="1"/>
</dbReference>
<dbReference type="CDD" id="cd18115">
    <property type="entry name" value="ATP-synt_F1_beta_N"/>
    <property type="match status" value="1"/>
</dbReference>
<dbReference type="CDD" id="cd01133">
    <property type="entry name" value="F1-ATPase_beta_CD"/>
    <property type="match status" value="1"/>
</dbReference>
<dbReference type="FunFam" id="1.10.1140.10:FF:000001">
    <property type="entry name" value="ATP synthase subunit beta"/>
    <property type="match status" value="1"/>
</dbReference>
<dbReference type="FunFam" id="3.40.50.300:FF:000004">
    <property type="entry name" value="ATP synthase subunit beta"/>
    <property type="match status" value="1"/>
</dbReference>
<dbReference type="Gene3D" id="2.40.10.170">
    <property type="match status" value="1"/>
</dbReference>
<dbReference type="Gene3D" id="1.10.1140.10">
    <property type="entry name" value="Bovine Mitochondrial F1-atpase, Atp Synthase Beta Chain, Chain D, domain 3"/>
    <property type="match status" value="1"/>
</dbReference>
<dbReference type="Gene3D" id="3.40.50.300">
    <property type="entry name" value="P-loop containing nucleotide triphosphate hydrolases"/>
    <property type="match status" value="1"/>
</dbReference>
<dbReference type="HAMAP" id="MF_01347">
    <property type="entry name" value="ATP_synth_beta_bact"/>
    <property type="match status" value="1"/>
</dbReference>
<dbReference type="InterPro" id="IPR003593">
    <property type="entry name" value="AAA+_ATPase"/>
</dbReference>
<dbReference type="InterPro" id="IPR055190">
    <property type="entry name" value="ATP-synt_VA_C"/>
</dbReference>
<dbReference type="InterPro" id="IPR005722">
    <property type="entry name" value="ATP_synth_F1_bsu"/>
</dbReference>
<dbReference type="InterPro" id="IPR020003">
    <property type="entry name" value="ATPase_a/bsu_AS"/>
</dbReference>
<dbReference type="InterPro" id="IPR050053">
    <property type="entry name" value="ATPase_alpha/beta_chains"/>
</dbReference>
<dbReference type="InterPro" id="IPR004100">
    <property type="entry name" value="ATPase_F1/V1/A1_a/bsu_N"/>
</dbReference>
<dbReference type="InterPro" id="IPR036121">
    <property type="entry name" value="ATPase_F1/V1/A1_a/bsu_N_sf"/>
</dbReference>
<dbReference type="InterPro" id="IPR000194">
    <property type="entry name" value="ATPase_F1/V1/A1_a/bsu_nucl-bd"/>
</dbReference>
<dbReference type="InterPro" id="IPR024034">
    <property type="entry name" value="ATPase_F1/V1_b/a_C"/>
</dbReference>
<dbReference type="InterPro" id="IPR027417">
    <property type="entry name" value="P-loop_NTPase"/>
</dbReference>
<dbReference type="NCBIfam" id="TIGR01039">
    <property type="entry name" value="atpD"/>
    <property type="match status" value="1"/>
</dbReference>
<dbReference type="PANTHER" id="PTHR15184">
    <property type="entry name" value="ATP SYNTHASE"/>
    <property type="match status" value="1"/>
</dbReference>
<dbReference type="PANTHER" id="PTHR15184:SF71">
    <property type="entry name" value="ATP SYNTHASE SUBUNIT BETA, MITOCHONDRIAL"/>
    <property type="match status" value="1"/>
</dbReference>
<dbReference type="Pfam" id="PF00006">
    <property type="entry name" value="ATP-synt_ab"/>
    <property type="match status" value="1"/>
</dbReference>
<dbReference type="Pfam" id="PF02874">
    <property type="entry name" value="ATP-synt_ab_N"/>
    <property type="match status" value="1"/>
</dbReference>
<dbReference type="Pfam" id="PF22919">
    <property type="entry name" value="ATP-synt_VA_C"/>
    <property type="match status" value="1"/>
</dbReference>
<dbReference type="SMART" id="SM00382">
    <property type="entry name" value="AAA"/>
    <property type="match status" value="1"/>
</dbReference>
<dbReference type="SUPFAM" id="SSF47917">
    <property type="entry name" value="C-terminal domain of alpha and beta subunits of F1 ATP synthase"/>
    <property type="match status" value="1"/>
</dbReference>
<dbReference type="SUPFAM" id="SSF50615">
    <property type="entry name" value="N-terminal domain of alpha and beta subunits of F1 ATP synthase"/>
    <property type="match status" value="1"/>
</dbReference>
<dbReference type="SUPFAM" id="SSF52540">
    <property type="entry name" value="P-loop containing nucleoside triphosphate hydrolases"/>
    <property type="match status" value="1"/>
</dbReference>
<dbReference type="PROSITE" id="PS00152">
    <property type="entry name" value="ATPASE_ALPHA_BETA"/>
    <property type="match status" value="1"/>
</dbReference>